<comment type="function">
    <text evidence="2 7 12 14 24">Receptor for SLIT1 and SLIT2 that mediates cellular responses to molecular guidance cues in cellular migration, including axonal navigation at the ventral midline of the neural tube and projection of axons to different regions during neuronal development (PubMed:10102268, PubMed:24560577). Interaction with the intracellular domain of FLRT3 mediates axon attraction towards cells expressing NTN1 (PubMed:24560577). In axon growth cones, the silencing of the attractive effect of NTN1 by SLIT2 may require the formation of a ROBO1-DCC complex (By similarity). Plays a role in the regulation of cell migration via its interaction with MYO9B; inhibits MYO9B-mediated stimulation of RHOA GTPase activity, and thereby leads to increased levels of active, GTP-bound RHOA (PubMed:26529257). May be required for lung development (By similarity).</text>
</comment>
<comment type="subunit">
    <text evidence="2 7 9 11 12 13 14">Homodimer. Dimerization is mediated by the extracellular domain and is independent of SLIT liganding (PubMed:24673457). Interacts with SLIT1 (By similarity). Interacts with SLIT2 (PubMed:10102268, PubMed:11404413, PubMed:17848514). Interacts with FLRT3 (PubMed:24560577). Interacts with MYO9B (via Rho-GAP domain) (PubMed:26529257).</text>
</comment>
<comment type="interaction">
    <interactant intactId="EBI-399762">
        <id>Q9Y6N7</id>
    </interactant>
    <interactant intactId="EBI-1236865">
        <id>O94813</id>
        <label>SLIT2</label>
    </interactant>
    <organismsDiffer>false</organismsDiffer>
    <experiments>2</experiments>
</comment>
<comment type="interaction">
    <interactant intactId="EBI-399762">
        <id>Q9Y6N7</id>
    </interactant>
    <interactant intactId="EBI-1051034">
        <id>O75044</id>
        <label>SRGAP2</label>
    </interactant>
    <organismsDiffer>false</organismsDiffer>
    <experiments>3</experiments>
</comment>
<comment type="subcellular location">
    <subcellularLocation>
        <location evidence="12">Cell membrane</location>
        <topology evidence="24">Single-pass type I membrane protein</topology>
    </subcellularLocation>
    <subcellularLocation>
        <location evidence="2">Cell projection</location>
        <location evidence="2">Axon</location>
    </subcellularLocation>
    <subcellularLocation>
        <location evidence="1">Endoplasmic reticulum-Golgi intermediate compartment membrane</location>
        <topology evidence="1">Single-pass membrane protein</topology>
    </subcellularLocation>
    <text evidence="1 2">Detected at growth cones in thalamus neurons. Detected at growth cones in thalamus neurons (By similarity). PRRG4 prevents cell surface location and both colocalize in the Endoplasmic reticulum/Golgi adjacent to the cell nucleus (By similarity).</text>
</comment>
<comment type="alternative products">
    <event type="alternative splicing"/>
    <isoform>
        <id>Q9Y6N7-1</id>
        <name>1</name>
        <sequence type="displayed"/>
    </isoform>
    <isoform>
        <id>Q9Y6N7-2</id>
        <name>2</name>
        <sequence type="described" ref="VSP_010646"/>
    </isoform>
    <isoform>
        <id>Q9Y6N7-3</id>
        <name>3</name>
        <sequence type="described" ref="VSP_010643 VSP_010644 VSP_010645"/>
    </isoform>
    <isoform>
        <id>Q9Y6N7-4</id>
        <name>4</name>
        <sequence type="described" ref="VSP_010643 VSP_010644"/>
    </isoform>
    <isoform>
        <id>Q9Y6N7-5</id>
        <name>5</name>
        <sequence type="described" ref="VSP_043881 VSP_010645 VSP_043882"/>
    </isoform>
    <isoform>
        <id>Q9Y6N7-6</id>
        <name>6</name>
        <sequence type="described" ref="VSP_043881 VSP_010645 VSP_043882 VSP_046084"/>
    </isoform>
</comment>
<comment type="tissue specificity">
    <text evidence="20">Widely expressed, with exception of kidney.</text>
</comment>
<comment type="PTM">
    <text evidence="2">Ubiquitinated. May be deubiquitinated by USP33.</text>
</comment>
<comment type="disease" evidence="16 18">
    <disease id="DI-06637">
        <name>Neurooculorenal syndrome</name>
        <acronym>NORS</acronym>
        <description>An autosomal recessive syndrome characterized by variable clinical features including congenital renal anomalies, neurodevelopmental defects, intellectual impairment, cardiac defects, and ocular anomalies. Some affected individuals present in utero with renal agenesis and structural brain abnormalities incompatible with life.</description>
        <dbReference type="MIM" id="620305"/>
    </disease>
    <text>The disease is caused by variants affecting the gene represented in this entry.</text>
</comment>
<comment type="disease" evidence="19">
    <disease id="DI-06638">
        <name>Nystagmus 8, congenital, autosomal recessive</name>
        <acronym>NYS8</acronym>
        <description>A form of nystagmus, a condition defined as conjugated, spontaneous and involuntary ocular oscillations that appear at birth or during the first three months of life. Other associated features may include mildly decreased visual acuity, strabismus, astigmatism, and occasionally head nodding. NYS8 patients manifest bilateral horizontal nystagmus in the absence of other neurologic signs or symptoms. Brain imaging is normal.</description>
        <dbReference type="MIM" id="257400"/>
    </disease>
    <text>The disease may be caused by variants affecting the gene represented in this entry.</text>
</comment>
<comment type="disease" evidence="15 17">
    <disease id="DI-06636">
        <name>Pituitary hormone deficiency, combined or isolated, 8</name>
        <acronym>CPHD8</acronym>
        <description>An autosomal dominant disorder characterized by short stature due to growth hormone deficiency, variable deficiencies of other pituitary hormones, and pituitary abnormalities. Many CPHD8 patients present with pituitary stalk interruption syndrome that is characterized by pituitary gland insufficiency, thin or discontinuous pituitary stalk, anterior pituitary hypoplasia, and ectopic positioning of the posterior pituitary gland.</description>
        <dbReference type="MIM" id="620303"/>
    </disease>
    <text>The disease may be caused by variants affecting the gene represented in this entry.</text>
</comment>
<comment type="miscellaneous">
    <text>Maps within a region of overlapping homozygous deletions characterized in both small cell lung cancer cell lines (SCLC) and in a breast cancer cell line. The promoter region of ROBO1 shows complete hypermethylation of CpG sites in the BT-20 breast tumor cell lines, some primary invasive breast carcinomasa and some primary clear cell renal cell carcinomas (CC-RCC).</text>
</comment>
<comment type="miscellaneous">
    <molecule>Isoform 2</molecule>
    <text evidence="24">Incomplete.</text>
</comment>
<comment type="similarity">
    <text evidence="24">Belongs to the immunoglobulin superfamily. ROBO family.</text>
</comment>
<comment type="online information" name="Atlas of Genetics and Cytogenetics in Oncology and Haematology">
    <link uri="https://atlasgeneticsoncology.org/gene/42140/ROBO1"/>
</comment>
<name>ROBO1_HUMAN</name>
<dbReference type="EMBL" id="AF040990">
    <property type="protein sequence ID" value="AAC39575.1"/>
    <property type="molecule type" value="mRNA"/>
</dbReference>
<dbReference type="EMBL" id="Z95705">
    <property type="status" value="NOT_ANNOTATED_CDS"/>
    <property type="molecule type" value="Genomic_DNA"/>
</dbReference>
<dbReference type="EMBL" id="AC016946">
    <property type="status" value="NOT_ANNOTATED_CDS"/>
    <property type="molecule type" value="Genomic_DNA"/>
</dbReference>
<dbReference type="EMBL" id="AC055731">
    <property type="status" value="NOT_ANNOTATED_CDS"/>
    <property type="molecule type" value="Genomic_DNA"/>
</dbReference>
<dbReference type="EMBL" id="AC106718">
    <property type="status" value="NOT_ANNOTATED_CDS"/>
    <property type="molecule type" value="Genomic_DNA"/>
</dbReference>
<dbReference type="EMBL" id="AC106720">
    <property type="status" value="NOT_ANNOTATED_CDS"/>
    <property type="molecule type" value="Genomic_DNA"/>
</dbReference>
<dbReference type="EMBL" id="AC108719">
    <property type="status" value="NOT_ANNOTATED_CDS"/>
    <property type="molecule type" value="Genomic_DNA"/>
</dbReference>
<dbReference type="EMBL" id="AC117461">
    <property type="status" value="NOT_ANNOTATED_CDS"/>
    <property type="molecule type" value="Genomic_DNA"/>
</dbReference>
<dbReference type="EMBL" id="AC117479">
    <property type="status" value="NOT_ANNOTATED_CDS"/>
    <property type="molecule type" value="Genomic_DNA"/>
</dbReference>
<dbReference type="EMBL" id="AC119035">
    <property type="status" value="NOT_ANNOTATED_CDS"/>
    <property type="molecule type" value="Genomic_DNA"/>
</dbReference>
<dbReference type="EMBL" id="AC123565">
    <property type="status" value="NOT_ANNOTATED_CDS"/>
    <property type="molecule type" value="Genomic_DNA"/>
</dbReference>
<dbReference type="EMBL" id="AC125624">
    <property type="status" value="NOT_ANNOTATED_CDS"/>
    <property type="molecule type" value="Genomic_DNA"/>
</dbReference>
<dbReference type="EMBL" id="AC125766">
    <property type="status" value="NOT_ANNOTATED_CDS"/>
    <property type="molecule type" value="Genomic_DNA"/>
</dbReference>
<dbReference type="EMBL" id="AC125815">
    <property type="status" value="NOT_ANNOTATED_CDS"/>
    <property type="molecule type" value="Genomic_DNA"/>
</dbReference>
<dbReference type="EMBL" id="AC131008">
    <property type="status" value="NOT_ANNOTATED_CDS"/>
    <property type="molecule type" value="Genomic_DNA"/>
</dbReference>
<dbReference type="EMBL" id="CH471110">
    <property type="protein sequence ID" value="EAW68884.1"/>
    <property type="molecule type" value="Genomic_DNA"/>
</dbReference>
<dbReference type="EMBL" id="CH471110">
    <property type="protein sequence ID" value="EAW68885.1"/>
    <property type="molecule type" value="Genomic_DNA"/>
</dbReference>
<dbReference type="EMBL" id="BC001969">
    <property type="protein sequence ID" value="AAH01969.1"/>
    <property type="molecule type" value="mRNA"/>
</dbReference>
<dbReference type="EMBL" id="BC115022">
    <property type="protein sequence ID" value="AAI15023.1"/>
    <property type="molecule type" value="mRNA"/>
</dbReference>
<dbReference type="EMBL" id="BC157861">
    <property type="protein sequence ID" value="AAI57862.1"/>
    <property type="molecule type" value="mRNA"/>
</dbReference>
<dbReference type="EMBL" id="BC171855">
    <property type="protein sequence ID" value="AAI71855.1"/>
    <property type="molecule type" value="mRNA"/>
</dbReference>
<dbReference type="EMBL" id="BX538319">
    <property type="protein sequence ID" value="CAD98093.1"/>
    <property type="molecule type" value="mRNA"/>
</dbReference>
<dbReference type="CCDS" id="CCDS46872.2">
    <molecule id="Q9Y6N7-5"/>
</dbReference>
<dbReference type="CCDS" id="CCDS54610.1">
    <molecule id="Q9Y6N7-6"/>
</dbReference>
<dbReference type="CCDS" id="CCDS54611.1">
    <molecule id="Q9Y6N7-1"/>
</dbReference>
<dbReference type="RefSeq" id="NP_001139317.1">
    <molecule id="Q9Y6N7-6"/>
    <property type="nucleotide sequence ID" value="NM_001145845.2"/>
</dbReference>
<dbReference type="RefSeq" id="NP_002932.1">
    <molecule id="Q9Y6N7-1"/>
    <property type="nucleotide sequence ID" value="NM_002941.4"/>
</dbReference>
<dbReference type="RefSeq" id="NP_598334.2">
    <molecule id="Q9Y6N7-5"/>
    <property type="nucleotide sequence ID" value="NM_133631.4"/>
</dbReference>
<dbReference type="RefSeq" id="XP_006713340.1">
    <molecule id="Q9Y6N7-3"/>
    <property type="nucleotide sequence ID" value="XM_006713277.4"/>
</dbReference>
<dbReference type="RefSeq" id="XP_016862472.1">
    <molecule id="Q9Y6N7-4"/>
    <property type="nucleotide sequence ID" value="XM_017006983.3"/>
</dbReference>
<dbReference type="RefSeq" id="XP_054203423.1">
    <molecule id="Q9Y6N7-3"/>
    <property type="nucleotide sequence ID" value="XM_054347448.1"/>
</dbReference>
<dbReference type="RefSeq" id="XP_054203425.1">
    <molecule id="Q9Y6N7-4"/>
    <property type="nucleotide sequence ID" value="XM_054347450.1"/>
</dbReference>
<dbReference type="PDB" id="2EO9">
    <property type="method" value="NMR"/>
    <property type="chains" value="A=454-564"/>
</dbReference>
<dbReference type="PDB" id="2V9Q">
    <property type="method" value="X-ray"/>
    <property type="resolution" value="2.50 A"/>
    <property type="chains" value="A=61-266"/>
</dbReference>
<dbReference type="PDB" id="2V9R">
    <property type="method" value="X-ray"/>
    <property type="resolution" value="2.00 A"/>
    <property type="chains" value="A=61-266"/>
</dbReference>
<dbReference type="PDB" id="2V9T">
    <property type="method" value="X-ray"/>
    <property type="resolution" value="1.70 A"/>
    <property type="chains" value="A=61-166"/>
</dbReference>
<dbReference type="PDB" id="3WIH">
    <property type="method" value="X-ray"/>
    <property type="resolution" value="1.70 A"/>
    <property type="chains" value="A/B=777-873"/>
</dbReference>
<dbReference type="PDB" id="4HLJ">
    <property type="method" value="X-ray"/>
    <property type="resolution" value="1.80 A"/>
    <property type="chains" value="A=660-897"/>
</dbReference>
<dbReference type="PDB" id="5O5G">
    <property type="method" value="X-ray"/>
    <property type="resolution" value="3.03 A"/>
    <property type="chains" value="A=63-446"/>
</dbReference>
<dbReference type="PDB" id="5O5I">
    <property type="method" value="X-ray"/>
    <property type="resolution" value="3.01 A"/>
    <property type="chains" value="A=454-543"/>
</dbReference>
<dbReference type="PDB" id="5OPE">
    <property type="method" value="X-ray"/>
    <property type="resolution" value="2.54 A"/>
    <property type="chains" value="A=63-447"/>
</dbReference>
<dbReference type="PDB" id="6A77">
    <property type="method" value="X-ray"/>
    <property type="resolution" value="2.00 A"/>
    <property type="chains" value="A=455-543"/>
</dbReference>
<dbReference type="PDB" id="6A78">
    <property type="method" value="X-ray"/>
    <property type="resolution" value="2.10 A"/>
    <property type="chains" value="A/B=455-543"/>
</dbReference>
<dbReference type="PDB" id="6A79">
    <property type="method" value="X-ray"/>
    <property type="resolution" value="2.31 A"/>
    <property type="chains" value="A/B=455-543"/>
</dbReference>
<dbReference type="PDBsum" id="2EO9"/>
<dbReference type="PDBsum" id="2V9Q"/>
<dbReference type="PDBsum" id="2V9R"/>
<dbReference type="PDBsum" id="2V9T"/>
<dbReference type="PDBsum" id="3WIH"/>
<dbReference type="PDBsum" id="4HLJ"/>
<dbReference type="PDBsum" id="5O5G"/>
<dbReference type="PDBsum" id="5O5I"/>
<dbReference type="PDBsum" id="5OPE"/>
<dbReference type="PDBsum" id="6A77"/>
<dbReference type="PDBsum" id="6A78"/>
<dbReference type="PDBsum" id="6A79"/>
<dbReference type="SMR" id="Q9Y6N7"/>
<dbReference type="BioGRID" id="112018">
    <property type="interactions" value="97"/>
</dbReference>
<dbReference type="DIP" id="DIP-33034N"/>
<dbReference type="ELM" id="Q9Y6N7"/>
<dbReference type="FunCoup" id="Q9Y6N7">
    <property type="interactions" value="1203"/>
</dbReference>
<dbReference type="IntAct" id="Q9Y6N7">
    <property type="interactions" value="39"/>
</dbReference>
<dbReference type="MINT" id="Q9Y6N7"/>
<dbReference type="STRING" id="9606.ENSP00000420321"/>
<dbReference type="GlyCosmos" id="Q9Y6N7">
    <property type="glycosylation" value="7 sites, 2 glycans"/>
</dbReference>
<dbReference type="GlyGen" id="Q9Y6N7">
    <property type="glycosylation" value="12 sites, 5 N-linked glycans (2 sites), 3 O-linked glycans (5 sites)"/>
</dbReference>
<dbReference type="iPTMnet" id="Q9Y6N7"/>
<dbReference type="PhosphoSitePlus" id="Q9Y6N7"/>
<dbReference type="SwissPalm" id="Q9Y6N7"/>
<dbReference type="BioMuta" id="ROBO1"/>
<dbReference type="DMDM" id="49036500"/>
<dbReference type="jPOST" id="Q9Y6N7"/>
<dbReference type="MassIVE" id="Q9Y6N7"/>
<dbReference type="PaxDb" id="9606-ENSP00000420321"/>
<dbReference type="PeptideAtlas" id="Q9Y6N7"/>
<dbReference type="ProteomicsDB" id="19585"/>
<dbReference type="ProteomicsDB" id="86744">
    <molecule id="Q9Y6N7-1"/>
</dbReference>
<dbReference type="ProteomicsDB" id="86745">
    <molecule id="Q9Y6N7-2"/>
</dbReference>
<dbReference type="ProteomicsDB" id="86746">
    <molecule id="Q9Y6N7-3"/>
</dbReference>
<dbReference type="ProteomicsDB" id="86747">
    <molecule id="Q9Y6N7-4"/>
</dbReference>
<dbReference type="ProteomicsDB" id="86748">
    <molecule id="Q9Y6N7-5"/>
</dbReference>
<dbReference type="Pumba" id="Q9Y6N7"/>
<dbReference type="ABCD" id="Q9Y6N7">
    <property type="antibodies" value="3 sequenced antibodies"/>
</dbReference>
<dbReference type="Antibodypedia" id="4617">
    <property type="antibodies" value="374 antibodies from 43 providers"/>
</dbReference>
<dbReference type="DNASU" id="6091"/>
<dbReference type="Ensembl" id="ENST00000464233.6">
    <molecule id="Q9Y6N7-1"/>
    <property type="protein sequence ID" value="ENSP00000420321.1"/>
    <property type="gene ID" value="ENSG00000169855.21"/>
</dbReference>
<dbReference type="Ensembl" id="ENST00000467549.5">
    <molecule id="Q9Y6N7-6"/>
    <property type="protein sequence ID" value="ENSP00000417992.1"/>
    <property type="gene ID" value="ENSG00000169855.21"/>
</dbReference>
<dbReference type="Ensembl" id="ENST00000495273.5">
    <molecule id="Q9Y6N7-5"/>
    <property type="protein sequence ID" value="ENSP00000420637.1"/>
    <property type="gene ID" value="ENSG00000169855.21"/>
</dbReference>
<dbReference type="GeneID" id="6091"/>
<dbReference type="KEGG" id="hsa:6091"/>
<dbReference type="MANE-Select" id="ENST00000464233.6">
    <property type="protein sequence ID" value="ENSP00000420321.1"/>
    <property type="RefSeq nucleotide sequence ID" value="NM_002941.4"/>
    <property type="RefSeq protein sequence ID" value="NP_002932.1"/>
</dbReference>
<dbReference type="UCSC" id="uc003dqc.3">
    <molecule id="Q9Y6N7-1"/>
    <property type="organism name" value="human"/>
</dbReference>
<dbReference type="AGR" id="HGNC:10249"/>
<dbReference type="CTD" id="6091"/>
<dbReference type="DisGeNET" id="6091"/>
<dbReference type="GeneCards" id="ROBO1"/>
<dbReference type="HGNC" id="HGNC:10249">
    <property type="gene designation" value="ROBO1"/>
</dbReference>
<dbReference type="HPA" id="ENSG00000169855">
    <property type="expression patterns" value="Low tissue specificity"/>
</dbReference>
<dbReference type="MalaCards" id="ROBO1"/>
<dbReference type="MIM" id="257400">
    <property type="type" value="phenotype"/>
</dbReference>
<dbReference type="MIM" id="602430">
    <property type="type" value="gene"/>
</dbReference>
<dbReference type="MIM" id="620303">
    <property type="type" value="phenotype"/>
</dbReference>
<dbReference type="MIM" id="620305">
    <property type="type" value="phenotype"/>
</dbReference>
<dbReference type="neXtProt" id="NX_Q9Y6N7"/>
<dbReference type="OpenTargets" id="ENSG00000169855"/>
<dbReference type="Orphanet" id="95496">
    <property type="disease" value="Pituitary stalk interruption syndrome"/>
</dbReference>
<dbReference type="PharmGKB" id="PA34620"/>
<dbReference type="VEuPathDB" id="HostDB:ENSG00000169855"/>
<dbReference type="eggNOG" id="KOG4222">
    <property type="taxonomic scope" value="Eukaryota"/>
</dbReference>
<dbReference type="GeneTree" id="ENSGT00940000154477"/>
<dbReference type="HOGENOM" id="CLU_003227_3_0_1"/>
<dbReference type="InParanoid" id="Q9Y6N7"/>
<dbReference type="OMA" id="QIRYAKX"/>
<dbReference type="OrthoDB" id="428111at2759"/>
<dbReference type="PAN-GO" id="Q9Y6N7">
    <property type="GO annotations" value="0 GO annotations based on evolutionary models"/>
</dbReference>
<dbReference type="PhylomeDB" id="Q9Y6N7"/>
<dbReference type="TreeFam" id="TF351053"/>
<dbReference type="PathwayCommons" id="Q9Y6N7"/>
<dbReference type="Reactome" id="R-HSA-373752">
    <property type="pathway name" value="Netrin-1 signaling"/>
</dbReference>
<dbReference type="Reactome" id="R-HSA-376176">
    <property type="pathway name" value="Signaling by ROBO receptors"/>
</dbReference>
<dbReference type="Reactome" id="R-HSA-428540">
    <property type="pathway name" value="Activation of RAC1"/>
</dbReference>
<dbReference type="Reactome" id="R-HSA-428542">
    <property type="pathway name" value="Regulation of commissural axon pathfinding by SLIT and ROBO"/>
</dbReference>
<dbReference type="Reactome" id="R-HSA-428543">
    <property type="pathway name" value="Inactivation of CDC42 and RAC1"/>
</dbReference>
<dbReference type="Reactome" id="R-HSA-428890">
    <property type="pathway name" value="Role of ABL in ROBO-SLIT signaling"/>
</dbReference>
<dbReference type="Reactome" id="R-HSA-8985586">
    <property type="pathway name" value="SLIT2:ROBO1 increases RHOA activity"/>
</dbReference>
<dbReference type="Reactome" id="R-HSA-8985801">
    <property type="pathway name" value="Regulation of cortical dendrite branching"/>
</dbReference>
<dbReference type="Reactome" id="R-HSA-9010553">
    <property type="pathway name" value="Regulation of expression of SLITs and ROBOs"/>
</dbReference>
<dbReference type="SignaLink" id="Q9Y6N7"/>
<dbReference type="SIGNOR" id="Q9Y6N7"/>
<dbReference type="BioGRID-ORCS" id="6091">
    <property type="hits" value="11 hits in 1151 CRISPR screens"/>
</dbReference>
<dbReference type="ChiTaRS" id="ROBO1">
    <property type="organism name" value="human"/>
</dbReference>
<dbReference type="EvolutionaryTrace" id="Q9Y6N7"/>
<dbReference type="GeneWiki" id="ROBO1"/>
<dbReference type="GenomeRNAi" id="6091"/>
<dbReference type="Pharos" id="Q9Y6N7">
    <property type="development level" value="Tbio"/>
</dbReference>
<dbReference type="PRO" id="PR:Q9Y6N7"/>
<dbReference type="Proteomes" id="UP000005640">
    <property type="component" value="Chromosome 3"/>
</dbReference>
<dbReference type="RNAct" id="Q9Y6N7">
    <property type="molecule type" value="protein"/>
</dbReference>
<dbReference type="Bgee" id="ENSG00000169855">
    <property type="expression patterns" value="Expressed in ventricular zone and 208 other cell types or tissues"/>
</dbReference>
<dbReference type="ExpressionAtlas" id="Q9Y6N7">
    <property type="expression patterns" value="baseline and differential"/>
</dbReference>
<dbReference type="GO" id="GO:0030424">
    <property type="term" value="C:axon"/>
    <property type="evidence" value="ECO:0007669"/>
    <property type="project" value="UniProtKB-SubCell"/>
</dbReference>
<dbReference type="GO" id="GO:0009986">
    <property type="term" value="C:cell surface"/>
    <property type="evidence" value="ECO:0000314"/>
    <property type="project" value="UniProtKB"/>
</dbReference>
<dbReference type="GO" id="GO:0005929">
    <property type="term" value="C:cilium"/>
    <property type="evidence" value="ECO:0000314"/>
    <property type="project" value="HPA"/>
</dbReference>
<dbReference type="GO" id="GO:0005737">
    <property type="term" value="C:cytoplasm"/>
    <property type="evidence" value="ECO:0000314"/>
    <property type="project" value="UniProtKB"/>
</dbReference>
<dbReference type="GO" id="GO:0005829">
    <property type="term" value="C:cytosol"/>
    <property type="evidence" value="ECO:0000314"/>
    <property type="project" value="HPA"/>
</dbReference>
<dbReference type="GO" id="GO:0033116">
    <property type="term" value="C:endoplasmic reticulum-Golgi intermediate compartment membrane"/>
    <property type="evidence" value="ECO:0007669"/>
    <property type="project" value="UniProtKB-SubCell"/>
</dbReference>
<dbReference type="GO" id="GO:0005886">
    <property type="term" value="C:plasma membrane"/>
    <property type="evidence" value="ECO:0000314"/>
    <property type="project" value="HPA"/>
</dbReference>
<dbReference type="GO" id="GO:0008046">
    <property type="term" value="F:axon guidance receptor activity"/>
    <property type="evidence" value="ECO:0000314"/>
    <property type="project" value="BHF-UCL"/>
</dbReference>
<dbReference type="GO" id="GO:0042802">
    <property type="term" value="F:identical protein binding"/>
    <property type="evidence" value="ECO:0000314"/>
    <property type="project" value="UniProtKB"/>
</dbReference>
<dbReference type="GO" id="GO:0030275">
    <property type="term" value="F:LRR domain binding"/>
    <property type="evidence" value="ECO:0000353"/>
    <property type="project" value="UniProtKB"/>
</dbReference>
<dbReference type="GO" id="GO:0035904">
    <property type="term" value="P:aorta development"/>
    <property type="evidence" value="ECO:0000250"/>
    <property type="project" value="BHF-UCL"/>
</dbReference>
<dbReference type="GO" id="GO:0003180">
    <property type="term" value="P:aortic valve morphogenesis"/>
    <property type="evidence" value="ECO:0000250"/>
    <property type="project" value="BHF-UCL"/>
</dbReference>
<dbReference type="GO" id="GO:0016199">
    <property type="term" value="P:axon midline choice point recognition"/>
    <property type="evidence" value="ECO:0000250"/>
    <property type="project" value="UniProtKB"/>
</dbReference>
<dbReference type="GO" id="GO:0007155">
    <property type="term" value="P:cell adhesion"/>
    <property type="evidence" value="ECO:0000304"/>
    <property type="project" value="ProtInc"/>
</dbReference>
<dbReference type="GO" id="GO:0002042">
    <property type="term" value="P:cell migration involved in sprouting angiogenesis"/>
    <property type="evidence" value="ECO:0000315"/>
    <property type="project" value="BHF-UCL"/>
</dbReference>
<dbReference type="GO" id="GO:0021836">
    <property type="term" value="P:chemorepulsion involved in postnatal olfactory bulb interneuron migration"/>
    <property type="evidence" value="ECO:0000314"/>
    <property type="project" value="UniProtKB"/>
</dbReference>
<dbReference type="GO" id="GO:0003272">
    <property type="term" value="P:endocardial cushion formation"/>
    <property type="evidence" value="ECO:0000250"/>
    <property type="project" value="BHF-UCL"/>
</dbReference>
<dbReference type="GO" id="GO:0003129">
    <property type="term" value="P:heart induction"/>
    <property type="evidence" value="ECO:0000250"/>
    <property type="project" value="BHF-UCL"/>
</dbReference>
<dbReference type="GO" id="GO:0007156">
    <property type="term" value="P:homophilic cell adhesion via plasma membrane adhesion molecules"/>
    <property type="evidence" value="ECO:0000314"/>
    <property type="project" value="UniProtKB"/>
</dbReference>
<dbReference type="GO" id="GO:0030336">
    <property type="term" value="P:negative regulation of cell migration"/>
    <property type="evidence" value="ECO:0000315"/>
    <property type="project" value="UniProtKB"/>
</dbReference>
<dbReference type="GO" id="GO:0070100">
    <property type="term" value="P:negative regulation of chemokine-mediated signaling pathway"/>
    <property type="evidence" value="ECO:0000315"/>
    <property type="project" value="BHF-UCL"/>
</dbReference>
<dbReference type="GO" id="GO:0010629">
    <property type="term" value="P:negative regulation of gene expression"/>
    <property type="evidence" value="ECO:0000250"/>
    <property type="project" value="BHF-UCL"/>
</dbReference>
<dbReference type="GO" id="GO:0033600">
    <property type="term" value="P:negative regulation of mammary gland epithelial cell proliferation"/>
    <property type="evidence" value="ECO:0000315"/>
    <property type="project" value="BHF-UCL"/>
</dbReference>
<dbReference type="GO" id="GO:0050925">
    <property type="term" value="P:negative regulation of negative chemotaxis"/>
    <property type="evidence" value="ECO:0000314"/>
    <property type="project" value="UniProtKB"/>
</dbReference>
<dbReference type="GO" id="GO:0007399">
    <property type="term" value="P:nervous system development"/>
    <property type="evidence" value="ECO:0000304"/>
    <property type="project" value="ProtInc"/>
</dbReference>
<dbReference type="GO" id="GO:0003148">
    <property type="term" value="P:outflow tract septum morphogenesis"/>
    <property type="evidence" value="ECO:0000250"/>
    <property type="project" value="BHF-UCL"/>
</dbReference>
<dbReference type="GO" id="GO:0050772">
    <property type="term" value="P:positive regulation of axonogenesis"/>
    <property type="evidence" value="ECO:0000314"/>
    <property type="project" value="UniProtKB"/>
</dbReference>
<dbReference type="GO" id="GO:0010628">
    <property type="term" value="P:positive regulation of gene expression"/>
    <property type="evidence" value="ECO:0000250"/>
    <property type="project" value="BHF-UCL"/>
</dbReference>
<dbReference type="GO" id="GO:0043410">
    <property type="term" value="P:positive regulation of MAPK cascade"/>
    <property type="evidence" value="ECO:0000315"/>
    <property type="project" value="BHF-UCL"/>
</dbReference>
<dbReference type="GO" id="GO:0045747">
    <property type="term" value="P:positive regulation of Notch signaling pathway"/>
    <property type="evidence" value="ECO:0000250"/>
    <property type="project" value="BHF-UCL"/>
</dbReference>
<dbReference type="GO" id="GO:0035025">
    <property type="term" value="P:positive regulation of Rho protein signal transduction"/>
    <property type="evidence" value="ECO:0000315"/>
    <property type="project" value="UniProtKB"/>
</dbReference>
<dbReference type="GO" id="GO:0030949">
    <property type="term" value="P:positive regulation of vascular endothelial growth factor receptor signaling pathway"/>
    <property type="evidence" value="ECO:0000315"/>
    <property type="project" value="BHF-UCL"/>
</dbReference>
<dbReference type="GO" id="GO:1900748">
    <property type="term" value="P:positive regulation of vascular endothelial growth factor signaling pathway"/>
    <property type="evidence" value="ECO:0000315"/>
    <property type="project" value="BHF-UCL"/>
</dbReference>
<dbReference type="GO" id="GO:0003184">
    <property type="term" value="P:pulmonary valve morphogenesis"/>
    <property type="evidence" value="ECO:0000250"/>
    <property type="project" value="BHF-UCL"/>
</dbReference>
<dbReference type="GO" id="GO:0035385">
    <property type="term" value="P:Roundabout signaling pathway"/>
    <property type="evidence" value="ECO:0000315"/>
    <property type="project" value="UniProtKB"/>
</dbReference>
<dbReference type="GO" id="GO:0060412">
    <property type="term" value="P:ventricular septum morphogenesis"/>
    <property type="evidence" value="ECO:0000250"/>
    <property type="project" value="BHF-UCL"/>
</dbReference>
<dbReference type="CDD" id="cd00063">
    <property type="entry name" value="FN3"/>
    <property type="match status" value="3"/>
</dbReference>
<dbReference type="CDD" id="cd07693">
    <property type="entry name" value="IgC_1_Robo"/>
    <property type="match status" value="1"/>
</dbReference>
<dbReference type="CDD" id="cd05724">
    <property type="entry name" value="IgI_2_Robo"/>
    <property type="match status" value="1"/>
</dbReference>
<dbReference type="CDD" id="cd05725">
    <property type="entry name" value="IgI_3_Robo"/>
    <property type="match status" value="1"/>
</dbReference>
<dbReference type="CDD" id="cd05726">
    <property type="entry name" value="IgI_4_Robo"/>
    <property type="match status" value="1"/>
</dbReference>
<dbReference type="CDD" id="cd20952">
    <property type="entry name" value="IgI_5_Robo"/>
    <property type="match status" value="1"/>
</dbReference>
<dbReference type="FunFam" id="2.60.40.10:FF:000053">
    <property type="entry name" value="Roundabout guidance receptor 1"/>
    <property type="match status" value="1"/>
</dbReference>
<dbReference type="FunFam" id="2.60.40.10:FF:000055">
    <property type="entry name" value="roundabout homolog 1 isoform X2"/>
    <property type="match status" value="1"/>
</dbReference>
<dbReference type="FunFam" id="2.60.40.10:FF:000065">
    <property type="entry name" value="roundabout homolog 1 isoform X3"/>
    <property type="match status" value="1"/>
</dbReference>
<dbReference type="FunFam" id="2.60.40.10:FF:000026">
    <property type="entry name" value="roundabout homolog 2 isoform X1"/>
    <property type="match status" value="1"/>
</dbReference>
<dbReference type="FunFam" id="2.60.40.10:FF:000008">
    <property type="entry name" value="roundabout homolog 2 isoform X2"/>
    <property type="match status" value="2"/>
</dbReference>
<dbReference type="FunFam" id="2.60.40.10:FF:000043">
    <property type="entry name" value="roundabout homolog 2 isoform X2"/>
    <property type="match status" value="1"/>
</dbReference>
<dbReference type="FunFam" id="2.60.40.10:FF:000058">
    <property type="entry name" value="roundabout homolog 2 isoform X3"/>
    <property type="match status" value="1"/>
</dbReference>
<dbReference type="Gene3D" id="2.60.40.10">
    <property type="entry name" value="Immunoglobulins"/>
    <property type="match status" value="8"/>
</dbReference>
<dbReference type="InterPro" id="IPR003961">
    <property type="entry name" value="FN3_dom"/>
</dbReference>
<dbReference type="InterPro" id="IPR036116">
    <property type="entry name" value="FN3_sf"/>
</dbReference>
<dbReference type="InterPro" id="IPR007110">
    <property type="entry name" value="Ig-like_dom"/>
</dbReference>
<dbReference type="InterPro" id="IPR036179">
    <property type="entry name" value="Ig-like_dom_sf"/>
</dbReference>
<dbReference type="InterPro" id="IPR013783">
    <property type="entry name" value="Ig-like_fold"/>
</dbReference>
<dbReference type="InterPro" id="IPR013098">
    <property type="entry name" value="Ig_I-set"/>
</dbReference>
<dbReference type="InterPro" id="IPR003599">
    <property type="entry name" value="Ig_sub"/>
</dbReference>
<dbReference type="InterPro" id="IPR003598">
    <property type="entry name" value="Ig_sub2"/>
</dbReference>
<dbReference type="InterPro" id="IPR013106">
    <property type="entry name" value="Ig_V-set"/>
</dbReference>
<dbReference type="InterPro" id="IPR051170">
    <property type="entry name" value="Neural/epithelial_adhesion"/>
</dbReference>
<dbReference type="InterPro" id="IPR032986">
    <property type="entry name" value="Robo1_Ig-like3"/>
</dbReference>
<dbReference type="PANTHER" id="PTHR12231">
    <property type="entry name" value="CTX-RELATED TYPE I TRANSMEMBRANE PROTEIN"/>
    <property type="match status" value="1"/>
</dbReference>
<dbReference type="PANTHER" id="PTHR12231:SF243">
    <property type="entry name" value="ROUNDABOUT HOMOLOG 1"/>
    <property type="match status" value="1"/>
</dbReference>
<dbReference type="Pfam" id="PF00041">
    <property type="entry name" value="fn3"/>
    <property type="match status" value="3"/>
</dbReference>
<dbReference type="Pfam" id="PF07679">
    <property type="entry name" value="I-set"/>
    <property type="match status" value="2"/>
</dbReference>
<dbReference type="Pfam" id="PF13927">
    <property type="entry name" value="Ig_3"/>
    <property type="match status" value="3"/>
</dbReference>
<dbReference type="SMART" id="SM00060">
    <property type="entry name" value="FN3"/>
    <property type="match status" value="3"/>
</dbReference>
<dbReference type="SMART" id="SM00409">
    <property type="entry name" value="IG"/>
    <property type="match status" value="5"/>
</dbReference>
<dbReference type="SMART" id="SM00408">
    <property type="entry name" value="IGc2"/>
    <property type="match status" value="5"/>
</dbReference>
<dbReference type="SMART" id="SM00406">
    <property type="entry name" value="IGv"/>
    <property type="match status" value="2"/>
</dbReference>
<dbReference type="SUPFAM" id="SSF49265">
    <property type="entry name" value="Fibronectin type III"/>
    <property type="match status" value="2"/>
</dbReference>
<dbReference type="SUPFAM" id="SSF48726">
    <property type="entry name" value="Immunoglobulin"/>
    <property type="match status" value="5"/>
</dbReference>
<dbReference type="PROSITE" id="PS50853">
    <property type="entry name" value="FN3"/>
    <property type="match status" value="3"/>
</dbReference>
<dbReference type="PROSITE" id="PS50835">
    <property type="entry name" value="IG_LIKE"/>
    <property type="match status" value="5"/>
</dbReference>
<protein>
    <recommendedName>
        <fullName>Roundabout homolog 1</fullName>
    </recommendedName>
    <alternativeName>
        <fullName>Deleted in U twenty twenty</fullName>
    </alternativeName>
    <alternativeName>
        <fullName>H-Robo-1</fullName>
    </alternativeName>
</protein>
<accession>Q9Y6N7</accession>
<accession>B2RXI1</accession>
<accession>D3DU36</accession>
<accession>E9PD49</accession>
<accession>Q1RMC7</accession>
<accession>Q7Z300</accession>
<accession>Q9BUS7</accession>
<feature type="signal peptide" evidence="3">
    <location>
        <begin position="1"/>
        <end position="25"/>
    </location>
</feature>
<feature type="chain" id="PRO_0000031033" description="Roundabout homolog 1">
    <location>
        <begin position="26"/>
        <end position="1651"/>
    </location>
</feature>
<feature type="topological domain" description="Extracellular" evidence="3">
    <location>
        <begin position="26"/>
        <end position="897"/>
    </location>
</feature>
<feature type="transmembrane region" description="Helical" evidence="3">
    <location>
        <begin position="898"/>
        <end position="918"/>
    </location>
</feature>
<feature type="topological domain" description="Cytoplasmic" evidence="3">
    <location>
        <begin position="919"/>
        <end position="1651"/>
    </location>
</feature>
<feature type="domain" description="Ig-like C2-type 1">
    <location>
        <begin position="68"/>
        <end position="164"/>
    </location>
</feature>
<feature type="domain" description="Ig-like C2-type 2">
    <location>
        <begin position="170"/>
        <end position="257"/>
    </location>
</feature>
<feature type="domain" description="Ig-like C2-type 3">
    <location>
        <begin position="262"/>
        <end position="346"/>
    </location>
</feature>
<feature type="domain" description="Ig-like C2-type 4">
    <location>
        <begin position="351"/>
        <end position="446"/>
    </location>
</feature>
<feature type="domain" description="Ig-like C2-type 5">
    <location>
        <begin position="455"/>
        <end position="541"/>
    </location>
</feature>
<feature type="domain" description="Fibronectin type-III 1" evidence="5">
    <location>
        <begin position="563"/>
        <end position="657"/>
    </location>
</feature>
<feature type="domain" description="Fibronectin type-III 2" evidence="5">
    <location>
        <begin position="676"/>
        <end position="773"/>
    </location>
</feature>
<feature type="domain" description="Fibronectin type-III 3" evidence="5">
    <location>
        <begin position="778"/>
        <end position="874"/>
    </location>
</feature>
<feature type="region of interest" description="Disordered" evidence="6">
    <location>
        <begin position="33"/>
        <end position="57"/>
    </location>
</feature>
<feature type="region of interest" description="Disordered" evidence="6">
    <location>
        <begin position="1124"/>
        <end position="1202"/>
    </location>
</feature>
<feature type="region of interest" description="Disordered" evidence="6">
    <location>
        <begin position="1224"/>
        <end position="1337"/>
    </location>
</feature>
<feature type="region of interest" description="Disordered" evidence="6">
    <location>
        <begin position="1352"/>
        <end position="1397"/>
    </location>
</feature>
<feature type="region of interest" description="Disordered" evidence="6">
    <location>
        <begin position="1420"/>
        <end position="1651"/>
    </location>
</feature>
<feature type="compositionally biased region" description="Polar residues" evidence="6">
    <location>
        <begin position="44"/>
        <end position="56"/>
    </location>
</feature>
<feature type="compositionally biased region" description="Polar residues" evidence="6">
    <location>
        <begin position="1137"/>
        <end position="1146"/>
    </location>
</feature>
<feature type="compositionally biased region" description="Low complexity" evidence="6">
    <location>
        <begin position="1147"/>
        <end position="1163"/>
    </location>
</feature>
<feature type="compositionally biased region" description="Pro residues" evidence="6">
    <location>
        <begin position="1186"/>
        <end position="1196"/>
    </location>
</feature>
<feature type="compositionally biased region" description="Polar residues" evidence="6">
    <location>
        <begin position="1255"/>
        <end position="1269"/>
    </location>
</feature>
<feature type="compositionally biased region" description="Basic and acidic residues" evidence="6">
    <location>
        <begin position="1281"/>
        <end position="1293"/>
    </location>
</feature>
<feature type="compositionally biased region" description="Pro residues" evidence="6">
    <location>
        <begin position="1296"/>
        <end position="1307"/>
    </location>
</feature>
<feature type="compositionally biased region" description="Acidic residues" evidence="6">
    <location>
        <begin position="1322"/>
        <end position="1336"/>
    </location>
</feature>
<feature type="compositionally biased region" description="Low complexity" evidence="6">
    <location>
        <begin position="1384"/>
        <end position="1397"/>
    </location>
</feature>
<feature type="compositionally biased region" description="Polar residues" evidence="6">
    <location>
        <begin position="1438"/>
        <end position="1451"/>
    </location>
</feature>
<feature type="compositionally biased region" description="Basic residues" evidence="6">
    <location>
        <begin position="1459"/>
        <end position="1470"/>
    </location>
</feature>
<feature type="compositionally biased region" description="Pro residues" evidence="6">
    <location>
        <begin position="1480"/>
        <end position="1490"/>
    </location>
</feature>
<feature type="compositionally biased region" description="Basic and acidic residues" evidence="6">
    <location>
        <begin position="1516"/>
        <end position="1541"/>
    </location>
</feature>
<feature type="compositionally biased region" description="Basic and acidic residues" evidence="6">
    <location>
        <begin position="1549"/>
        <end position="1573"/>
    </location>
</feature>
<feature type="compositionally biased region" description="Polar residues" evidence="6">
    <location>
        <begin position="1592"/>
        <end position="1601"/>
    </location>
</feature>
<feature type="compositionally biased region" description="Low complexity" evidence="6">
    <location>
        <begin position="1602"/>
        <end position="1614"/>
    </location>
</feature>
<feature type="compositionally biased region" description="Acidic residues" evidence="6">
    <location>
        <begin position="1642"/>
        <end position="1651"/>
    </location>
</feature>
<feature type="modified residue" description="Phosphoserine" evidence="29 30 31">
    <location>
        <position position="940"/>
    </location>
</feature>
<feature type="modified residue" description="Phosphothreonine" evidence="31">
    <location>
        <position position="948"/>
    </location>
</feature>
<feature type="modified residue" description="Phosphotyrosine; by ABL; in vitro" evidence="8">
    <location>
        <position position="1038"/>
    </location>
</feature>
<feature type="modified residue" description="Phosphoserine" evidence="29 31">
    <location>
        <position position="1055"/>
    </location>
</feature>
<feature type="modified residue" description="Phosphotyrosine; by ABL; in vitro" evidence="8">
    <location>
        <position position="1073"/>
    </location>
</feature>
<feature type="modified residue" description="Phosphotyrosine; by ABL; in vitro" evidence="8">
    <location>
        <position position="1114"/>
    </location>
</feature>
<feature type="modified residue" description="Phosphothreonine" evidence="29">
    <location>
        <position position="1240"/>
    </location>
</feature>
<feature type="modified residue" description="Phosphoserine" evidence="29">
    <location>
        <position position="1297"/>
    </location>
</feature>
<feature type="glycosylation site" description="N-linked (GlcNAc...) asparagine" evidence="3">
    <location>
        <position position="160"/>
    </location>
</feature>
<feature type="glycosylation site" description="N-linked (GlcNAc...) asparagine" evidence="3">
    <location>
        <position position="463"/>
    </location>
</feature>
<feature type="glycosylation site" description="N-linked (GlcNAc...) asparagine" evidence="3">
    <location>
        <position position="790"/>
    </location>
</feature>
<feature type="glycosylation site" description="N-linked (GlcNAc...) asparagine" evidence="3">
    <location>
        <position position="820"/>
    </location>
</feature>
<feature type="glycosylation site" description="N-linked (GlcNAc...) asparagine" evidence="3">
    <location>
        <position position="827"/>
    </location>
</feature>
<feature type="disulfide bond" evidence="4 11 26 27 28">
    <location>
        <begin position="89"/>
        <end position="147"/>
    </location>
</feature>
<feature type="disulfide bond" evidence="4 11 26 27">
    <location>
        <begin position="191"/>
        <end position="240"/>
    </location>
</feature>
<feature type="disulfide bond" evidence="4">
    <location>
        <begin position="283"/>
        <end position="330"/>
    </location>
</feature>
<feature type="disulfide bond" evidence="4">
    <location>
        <begin position="372"/>
        <end position="428"/>
    </location>
</feature>
<feature type="disulfide bond" evidence="4 21 25">
    <location>
        <begin position="476"/>
        <end position="525"/>
    </location>
</feature>
<feature type="splice variant" id="VSP_043881" description="In isoform 5 and isoform 6." evidence="22">
    <original>MKWKHVPFLVMISLLSLSPNHLFLAQLIPDPEDVERGNDHGTPIPTSDNDDNSLGYT</original>
    <variation>MIAEPAHFYLFGLICLCS</variation>
    <location>
        <begin position="1"/>
        <end position="57"/>
    </location>
</feature>
<feature type="splice variant" id="VSP_010643" description="In isoform 3 and isoform 4." evidence="24">
    <location>
        <begin position="1"/>
        <end position="39"/>
    </location>
</feature>
<feature type="splice variant" id="VSP_010644" description="In isoform 3 and isoform 4." evidence="24">
    <original>HGTPIPTSDNDDNSLGYT</original>
    <variation>MIAEPAHFYLFGLICLCS</variation>
    <location>
        <begin position="40"/>
        <end position="57"/>
    </location>
</feature>
<feature type="splice variant" id="VSP_010645" description="In isoform 3, isoform 5 and isoform 6." evidence="22">
    <original>Q</original>
    <variation>QVGS</variation>
    <location>
        <position position="348"/>
    </location>
</feature>
<feature type="splice variant" id="VSP_010646" description="In isoform 2." evidence="23">
    <original>Q</original>
    <variation>QGKVN</variation>
    <location>
        <position position="543"/>
    </location>
</feature>
<feature type="splice variant" id="VSP_043882" description="In isoform 5 and isoform 6." evidence="22">
    <location>
        <begin position="938"/>
        <end position="946"/>
    </location>
</feature>
<feature type="splice variant" id="VSP_046084" description="In isoform 6." evidence="22">
    <location>
        <begin position="1013"/>
        <end position="1067"/>
    </location>
</feature>
<feature type="sequence variant" id="VAR_088311" description="In NORS; dbSNP:rs2082671645." evidence="16">
    <original>P</original>
    <variation>S</variation>
    <location>
        <position position="176"/>
    </location>
</feature>
<feature type="sequence variant" id="VAR_088312" description="In NORS." evidence="18">
    <location>
        <begin position="229"/>
        <end position="1651"/>
    </location>
</feature>
<feature type="sequence variant" id="VAR_088313" description="In CPHD8; uncertain significance; dbSNP:rs2081940708." evidence="15">
    <original>C</original>
    <variation>S</variation>
    <location>
        <position position="240"/>
    </location>
</feature>
<feature type="sequence variant" id="VAR_088314" description="In NORS; uncertain significance; dbSNP:rs80030397." evidence="18">
    <original>V</original>
    <variation>A</variation>
    <location>
        <position position="273"/>
    </location>
</feature>
<feature type="sequence variant" id="VAR_088315" description="In NORS." evidence="18">
    <location>
        <begin position="284"/>
        <end position="1651"/>
    </location>
</feature>
<feature type="sequence variant" id="VAR_053640" description="In dbSNP:rs9647397.">
    <original>V</original>
    <variation>A</variation>
    <location>
        <position position="336"/>
    </location>
</feature>
<feature type="sequence variant" id="VAR_088316" description="In NORS." evidence="18">
    <location>
        <begin position="400"/>
        <end position="1651"/>
    </location>
</feature>
<feature type="sequence variant" id="VAR_088317" description="Found in a patient with early-onset epileptic encephalopathy; uncertain significance; dbSNP:rs2107823148." evidence="19">
    <original>D</original>
    <variation>G</variation>
    <location>
        <position position="422"/>
    </location>
</feature>
<feature type="sequence variant" id="VAR_088318" description="In CPHD8; uncertain significance; dbSNP:rs1229827011." evidence="17">
    <original>P</original>
    <variation>S</variation>
    <location>
        <position position="564"/>
    </location>
</feature>
<feature type="sequence variant" id="VAR_088319" description="In NORS; uncertain significance; dbSNP:rs1707436610." evidence="18">
    <original>S</original>
    <variation>P</variation>
    <location>
        <position position="689"/>
    </location>
</feature>
<feature type="sequence variant" id="VAR_088320" description="In NORS." evidence="18">
    <location>
        <begin position="920"/>
        <end position="1651"/>
    </location>
</feature>
<feature type="sequence variant" id="VAR_088321" description="In NORS." evidence="18">
    <location>
        <begin position="975"/>
        <end position="1651"/>
    </location>
</feature>
<feature type="sequence variant" id="VAR_019071" description="In a breast cancer sample; dbSNP:rs919603543." evidence="10">
    <original>S</original>
    <variation>N</variation>
    <location>
        <position position="1055"/>
    </location>
</feature>
<feature type="sequence variant" id="VAR_053641" description="In dbSNP:rs35456279.">
    <original>S</original>
    <variation>N</variation>
    <location>
        <position position="1091"/>
    </location>
</feature>
<feature type="sequence variant" id="VAR_088322" description="In CPHD8." evidence="15">
    <location>
        <begin position="1150"/>
        <end position="1651"/>
    </location>
</feature>
<feature type="sequence variant" id="VAR_088323" description="In NORS." evidence="16">
    <location>
        <begin position="1229"/>
        <end position="1651"/>
    </location>
</feature>
<feature type="sequence variant" id="VAR_088324" description="In NORS." evidence="18">
    <location>
        <begin position="1386"/>
        <end position="1651"/>
    </location>
</feature>
<feature type="sequence variant" id="VAR_088325" description="In NYS8; uncertain significance; dbSNP:rs199958211." evidence="19">
    <original>S</original>
    <variation>L</variation>
    <location>
        <position position="1522"/>
    </location>
</feature>
<feature type="sequence variant" id="VAR_019072" description="In a breast cancer sample; dbSNP:rs36055689." evidence="10">
    <original>E</original>
    <variation>D</variation>
    <location>
        <position position="1533"/>
    </location>
</feature>
<feature type="sequence variant" id="VAR_088326" description="In NORS." evidence="16">
    <location>
        <begin position="1608"/>
        <end position="1651"/>
    </location>
</feature>
<feature type="sequence conflict" description="In Ref. 4; AAI15023." evidence="24" ref="4">
    <original>A</original>
    <variation>V</variation>
    <location>
        <position position="182"/>
    </location>
</feature>
<feature type="sequence conflict" description="In Ref. 4; AAI15023." evidence="24" ref="4">
    <original>F</original>
    <variation>L</variation>
    <location>
        <position position="835"/>
    </location>
</feature>
<feature type="sequence conflict" description="In Ref. 5; CAD98093." evidence="24" ref="5">
    <original>G</original>
    <variation>S</variation>
    <location>
        <position position="1095"/>
    </location>
</feature>
<feature type="sequence conflict" description="In Ref. 2; Z95705." evidence="24" ref="2">
    <original>M</original>
    <variation>T</variation>
    <location>
        <position position="1223"/>
    </location>
</feature>
<feature type="sequence conflict" description="In Ref. 5; CAD98093." evidence="24" ref="5">
    <original>P</original>
    <variation>L</variation>
    <location>
        <position position="1443"/>
    </location>
</feature>
<feature type="sequence conflict" description="In Ref. 2; Z95705." evidence="24" ref="2">
    <original>D</original>
    <variation>G</variation>
    <location>
        <position position="1536"/>
    </location>
</feature>
<feature type="strand" evidence="34">
    <location>
        <begin position="66"/>
        <end position="72"/>
    </location>
</feature>
<feature type="strand" evidence="34">
    <location>
        <begin position="77"/>
        <end position="79"/>
    </location>
</feature>
<feature type="strand" evidence="34">
    <location>
        <begin position="85"/>
        <end position="87"/>
    </location>
</feature>
<feature type="strand" evidence="34">
    <location>
        <begin position="90"/>
        <end position="95"/>
    </location>
</feature>
<feature type="strand" evidence="34">
    <location>
        <begin position="98"/>
        <end position="103"/>
    </location>
</feature>
<feature type="turn" evidence="34">
    <location>
        <begin position="111"/>
        <end position="113"/>
    </location>
</feature>
<feature type="strand" evidence="34">
    <location>
        <begin position="118"/>
        <end position="121"/>
    </location>
</feature>
<feature type="strand" evidence="34">
    <location>
        <begin position="127"/>
        <end position="131"/>
    </location>
</feature>
<feature type="strand" evidence="38">
    <location>
        <begin position="135"/>
        <end position="137"/>
    </location>
</feature>
<feature type="strand" evidence="34">
    <location>
        <begin position="143"/>
        <end position="151"/>
    </location>
</feature>
<feature type="strand" evidence="34">
    <location>
        <begin position="154"/>
        <end position="157"/>
    </location>
</feature>
<feature type="strand" evidence="34">
    <location>
        <begin position="161"/>
        <end position="165"/>
    </location>
</feature>
<feature type="strand" evidence="37">
    <location>
        <begin position="167"/>
        <end position="174"/>
    </location>
</feature>
<feature type="strand" evidence="33">
    <location>
        <begin position="179"/>
        <end position="182"/>
    </location>
</feature>
<feature type="strand" evidence="33">
    <location>
        <begin position="187"/>
        <end position="190"/>
    </location>
</feature>
<feature type="strand" evidence="33">
    <location>
        <begin position="196"/>
        <end position="198"/>
    </location>
</feature>
<feature type="strand" evidence="33">
    <location>
        <begin position="201"/>
        <end position="206"/>
    </location>
</feature>
<feature type="strand" evidence="33">
    <location>
        <begin position="209"/>
        <end position="211"/>
    </location>
</feature>
<feature type="strand" evidence="32">
    <location>
        <begin position="213"/>
        <end position="215"/>
    </location>
</feature>
<feature type="strand" evidence="33">
    <location>
        <begin position="218"/>
        <end position="221"/>
    </location>
</feature>
<feature type="strand" evidence="33">
    <location>
        <begin position="224"/>
        <end position="229"/>
    </location>
</feature>
<feature type="helix" evidence="33">
    <location>
        <begin position="232"/>
        <end position="234"/>
    </location>
</feature>
<feature type="strand" evidence="33">
    <location>
        <begin position="236"/>
        <end position="244"/>
    </location>
</feature>
<feature type="strand" evidence="33">
    <location>
        <begin position="247"/>
        <end position="250"/>
    </location>
</feature>
<feature type="strand" evidence="33">
    <location>
        <begin position="254"/>
        <end position="259"/>
    </location>
</feature>
<feature type="helix" evidence="32">
    <location>
        <begin position="261"/>
        <end position="266"/>
    </location>
</feature>
<feature type="strand" evidence="38">
    <location>
        <begin position="271"/>
        <end position="274"/>
    </location>
</feature>
<feature type="strand" evidence="38">
    <location>
        <begin position="279"/>
        <end position="281"/>
    </location>
</feature>
<feature type="strand" evidence="38">
    <location>
        <begin position="284"/>
        <end position="289"/>
    </location>
</feature>
<feature type="strand" evidence="38">
    <location>
        <begin position="292"/>
        <end position="300"/>
    </location>
</feature>
<feature type="strand" evidence="38">
    <location>
        <begin position="306"/>
        <end position="309"/>
    </location>
</feature>
<feature type="strand" evidence="38">
    <location>
        <begin position="315"/>
        <end position="317"/>
    </location>
</feature>
<feature type="helix" evidence="38">
    <location>
        <begin position="322"/>
        <end position="324"/>
    </location>
</feature>
<feature type="strand" evidence="38">
    <location>
        <begin position="326"/>
        <end position="333"/>
    </location>
</feature>
<feature type="strand" evidence="38">
    <location>
        <begin position="338"/>
        <end position="355"/>
    </location>
</feature>
<feature type="strand" evidence="38">
    <location>
        <begin position="360"/>
        <end position="363"/>
    </location>
</feature>
<feature type="strand" evidence="38">
    <location>
        <begin position="368"/>
        <end position="370"/>
    </location>
</feature>
<feature type="strand" evidence="38">
    <location>
        <begin position="373"/>
        <end position="378"/>
    </location>
</feature>
<feature type="strand" evidence="38">
    <location>
        <begin position="381"/>
        <end position="386"/>
    </location>
</feature>
<feature type="strand" evidence="38">
    <location>
        <begin position="395"/>
        <end position="397"/>
    </location>
</feature>
<feature type="strand" evidence="38">
    <location>
        <begin position="405"/>
        <end position="407"/>
    </location>
</feature>
<feature type="strand" evidence="38">
    <location>
        <begin position="413"/>
        <end position="415"/>
    </location>
</feature>
<feature type="helix" evidence="38">
    <location>
        <begin position="420"/>
        <end position="422"/>
    </location>
</feature>
<feature type="strand" evidence="38">
    <location>
        <begin position="424"/>
        <end position="431"/>
    </location>
</feature>
<feature type="strand" evidence="38">
    <location>
        <begin position="436"/>
        <end position="446"/>
    </location>
</feature>
<feature type="strand" evidence="39">
    <location>
        <begin position="456"/>
        <end position="459"/>
    </location>
</feature>
<feature type="strand" evidence="39">
    <location>
        <begin position="464"/>
        <end position="467"/>
    </location>
</feature>
<feature type="strand" evidence="39">
    <location>
        <begin position="472"/>
        <end position="475"/>
    </location>
</feature>
<feature type="strand" evidence="39">
    <location>
        <begin position="477"/>
        <end position="479"/>
    </location>
</feature>
<feature type="strand" evidence="39">
    <location>
        <begin position="485"/>
        <end position="490"/>
    </location>
</feature>
<feature type="strand" evidence="39">
    <location>
        <begin position="502"/>
        <end position="504"/>
    </location>
</feature>
<feature type="turn" evidence="40">
    <location>
        <begin position="506"/>
        <end position="508"/>
    </location>
</feature>
<feature type="strand" evidence="39">
    <location>
        <begin position="509"/>
        <end position="512"/>
    </location>
</feature>
<feature type="helix" evidence="39">
    <location>
        <begin position="517"/>
        <end position="519"/>
    </location>
</feature>
<feature type="strand" evidence="39">
    <location>
        <begin position="521"/>
        <end position="529"/>
    </location>
</feature>
<feature type="strand" evidence="39">
    <location>
        <begin position="532"/>
        <end position="543"/>
    </location>
</feature>
<feature type="helix" evidence="36">
    <location>
        <begin position="666"/>
        <end position="675"/>
    </location>
</feature>
<feature type="strand" evidence="36">
    <location>
        <begin position="676"/>
        <end position="680"/>
    </location>
</feature>
<feature type="strand" evidence="36">
    <location>
        <begin position="687"/>
        <end position="689"/>
    </location>
</feature>
<feature type="strand" evidence="36">
    <location>
        <begin position="691"/>
        <end position="699"/>
    </location>
</feature>
<feature type="strand" evidence="36">
    <location>
        <begin position="706"/>
        <end position="715"/>
    </location>
</feature>
<feature type="helix" evidence="36">
    <location>
        <begin position="719"/>
        <end position="721"/>
    </location>
</feature>
<feature type="strand" evidence="36">
    <location>
        <begin position="724"/>
        <end position="728"/>
    </location>
</feature>
<feature type="strand" evidence="36">
    <location>
        <begin position="735"/>
        <end position="738"/>
    </location>
</feature>
<feature type="strand" evidence="36">
    <location>
        <begin position="746"/>
        <end position="755"/>
    </location>
</feature>
<feature type="strand" evidence="36">
    <location>
        <begin position="766"/>
        <end position="769"/>
    </location>
</feature>
<feature type="strand" evidence="35">
    <location>
        <begin position="780"/>
        <end position="786"/>
    </location>
</feature>
<feature type="strand" evidence="35">
    <location>
        <begin position="789"/>
        <end position="791"/>
    </location>
</feature>
<feature type="strand" evidence="35">
    <location>
        <begin position="794"/>
        <end position="799"/>
    </location>
</feature>
<feature type="helix" evidence="36">
    <location>
        <begin position="803"/>
        <end position="805"/>
    </location>
</feature>
<feature type="strand" evidence="35">
    <location>
        <begin position="812"/>
        <end position="818"/>
    </location>
</feature>
<feature type="helix" evidence="35">
    <location>
        <begin position="822"/>
        <end position="824"/>
    </location>
</feature>
<feature type="strand" evidence="35">
    <location>
        <begin position="826"/>
        <end position="831"/>
    </location>
</feature>
<feature type="strand" evidence="35">
    <location>
        <begin position="836"/>
        <end position="839"/>
    </location>
</feature>
<feature type="strand" evidence="35">
    <location>
        <begin position="848"/>
        <end position="854"/>
    </location>
</feature>
<feature type="strand" evidence="35">
    <location>
        <begin position="867"/>
        <end position="869"/>
    </location>
</feature>
<feature type="helix" evidence="36">
    <location>
        <begin position="880"/>
        <end position="883"/>
    </location>
</feature>
<reference key="1">
    <citation type="journal article" date="1998" name="Cell">
        <title>Roundabout controls axon crossing of the CNS midline and defines a novel subfamily of evolutionarily conserved guidance receptors.</title>
        <authorList>
            <person name="Kidd T."/>
            <person name="Brose K."/>
            <person name="Mitchell K.J."/>
            <person name="Fetter R.D."/>
            <person name="Tessier-Lavigne M."/>
            <person name="Goodman C.S."/>
            <person name="Tear G."/>
        </authorList>
    </citation>
    <scope>NUCLEOTIDE SEQUENCE [MRNA] (ISOFORM 1)</scope>
</reference>
<reference key="2">
    <citation type="journal article" date="2006" name="Nature">
        <title>The DNA sequence, annotation and analysis of human chromosome 3.</title>
        <authorList>
            <person name="Muzny D.M."/>
            <person name="Scherer S.E."/>
            <person name="Kaul R."/>
            <person name="Wang J."/>
            <person name="Yu J."/>
            <person name="Sudbrak R."/>
            <person name="Buhay C.J."/>
            <person name="Chen R."/>
            <person name="Cree A."/>
            <person name="Ding Y."/>
            <person name="Dugan-Rocha S."/>
            <person name="Gill R."/>
            <person name="Gunaratne P."/>
            <person name="Harris R.A."/>
            <person name="Hawes A.C."/>
            <person name="Hernandez J."/>
            <person name="Hodgson A.V."/>
            <person name="Hume J."/>
            <person name="Jackson A."/>
            <person name="Khan Z.M."/>
            <person name="Kovar-Smith C."/>
            <person name="Lewis L.R."/>
            <person name="Lozado R.J."/>
            <person name="Metzker M.L."/>
            <person name="Milosavljevic A."/>
            <person name="Miner G.R."/>
            <person name="Morgan M.B."/>
            <person name="Nazareth L.V."/>
            <person name="Scott G."/>
            <person name="Sodergren E."/>
            <person name="Song X.-Z."/>
            <person name="Steffen D."/>
            <person name="Wei S."/>
            <person name="Wheeler D.A."/>
            <person name="Wright M.W."/>
            <person name="Worley K.C."/>
            <person name="Yuan Y."/>
            <person name="Zhang Z."/>
            <person name="Adams C.Q."/>
            <person name="Ansari-Lari M.A."/>
            <person name="Ayele M."/>
            <person name="Brown M.J."/>
            <person name="Chen G."/>
            <person name="Chen Z."/>
            <person name="Clendenning J."/>
            <person name="Clerc-Blankenburg K.P."/>
            <person name="Chen R."/>
            <person name="Chen Z."/>
            <person name="Davis C."/>
            <person name="Delgado O."/>
            <person name="Dinh H.H."/>
            <person name="Dong W."/>
            <person name="Draper H."/>
            <person name="Ernst S."/>
            <person name="Fu G."/>
            <person name="Gonzalez-Garay M.L."/>
            <person name="Garcia D.K."/>
            <person name="Gillett W."/>
            <person name="Gu J."/>
            <person name="Hao B."/>
            <person name="Haugen E."/>
            <person name="Havlak P."/>
            <person name="He X."/>
            <person name="Hennig S."/>
            <person name="Hu S."/>
            <person name="Huang W."/>
            <person name="Jackson L.R."/>
            <person name="Jacob L.S."/>
            <person name="Kelly S.H."/>
            <person name="Kube M."/>
            <person name="Levy R."/>
            <person name="Li Z."/>
            <person name="Liu B."/>
            <person name="Liu J."/>
            <person name="Liu W."/>
            <person name="Lu J."/>
            <person name="Maheshwari M."/>
            <person name="Nguyen B.-V."/>
            <person name="Okwuonu G.O."/>
            <person name="Palmeiri A."/>
            <person name="Pasternak S."/>
            <person name="Perez L.M."/>
            <person name="Phelps K.A."/>
            <person name="Plopper F.J."/>
            <person name="Qiang B."/>
            <person name="Raymond C."/>
            <person name="Rodriguez R."/>
            <person name="Saenphimmachak C."/>
            <person name="Santibanez J."/>
            <person name="Shen H."/>
            <person name="Shen Y."/>
            <person name="Subramanian S."/>
            <person name="Tabor P.E."/>
            <person name="Verduzco D."/>
            <person name="Waldron L."/>
            <person name="Wang J."/>
            <person name="Wang J."/>
            <person name="Wang Q."/>
            <person name="Williams G.A."/>
            <person name="Wong G.K.-S."/>
            <person name="Yao Z."/>
            <person name="Zhang J."/>
            <person name="Zhang X."/>
            <person name="Zhao G."/>
            <person name="Zhou J."/>
            <person name="Zhou Y."/>
            <person name="Nelson D."/>
            <person name="Lehrach H."/>
            <person name="Reinhardt R."/>
            <person name="Naylor S.L."/>
            <person name="Yang H."/>
            <person name="Olson M."/>
            <person name="Weinstock G."/>
            <person name="Gibbs R.A."/>
        </authorList>
    </citation>
    <scope>NUCLEOTIDE SEQUENCE [LARGE SCALE GENOMIC DNA]</scope>
</reference>
<reference key="3">
    <citation type="submission" date="2005-09" db="EMBL/GenBank/DDBJ databases">
        <authorList>
            <person name="Mural R.J."/>
            <person name="Istrail S."/>
            <person name="Sutton G.G."/>
            <person name="Florea L."/>
            <person name="Halpern A.L."/>
            <person name="Mobarry C.M."/>
            <person name="Lippert R."/>
            <person name="Walenz B."/>
            <person name="Shatkay H."/>
            <person name="Dew I."/>
            <person name="Miller J.R."/>
            <person name="Flanigan M.J."/>
            <person name="Edwards N.J."/>
            <person name="Bolanos R."/>
            <person name="Fasulo D."/>
            <person name="Halldorsson B.V."/>
            <person name="Hannenhalli S."/>
            <person name="Turner R."/>
            <person name="Yooseph S."/>
            <person name="Lu F."/>
            <person name="Nusskern D.R."/>
            <person name="Shue B.C."/>
            <person name="Zheng X.H."/>
            <person name="Zhong F."/>
            <person name="Delcher A.L."/>
            <person name="Huson D.H."/>
            <person name="Kravitz S.A."/>
            <person name="Mouchard L."/>
            <person name="Reinert K."/>
            <person name="Remington K.A."/>
            <person name="Clark A.G."/>
            <person name="Waterman M.S."/>
            <person name="Eichler E.E."/>
            <person name="Adams M.D."/>
            <person name="Hunkapiller M.W."/>
            <person name="Myers E.W."/>
            <person name="Venter J.C."/>
        </authorList>
    </citation>
    <scope>NUCLEOTIDE SEQUENCE [LARGE SCALE GENOMIC DNA]</scope>
</reference>
<reference key="4">
    <citation type="journal article" date="2004" name="Genome Res.">
        <title>The status, quality, and expansion of the NIH full-length cDNA project: the Mammalian Gene Collection (MGC).</title>
        <authorList>
            <consortium name="The MGC Project Team"/>
        </authorList>
    </citation>
    <scope>NUCLEOTIDE SEQUENCE [LARGE SCALE MRNA] (ISOFORMS 5 AND 6)</scope>
    <scope>NUCLEOTIDE SEQUENCE [LARGE SCALE MRNA] OF 1158-1651 (ISOFORMS 1/2/3/4)</scope>
    <source>
        <tissue>Placenta</tissue>
    </source>
</reference>
<reference key="5">
    <citation type="journal article" date="2007" name="BMC Genomics">
        <title>The full-ORF clone resource of the German cDNA consortium.</title>
        <authorList>
            <person name="Bechtel S."/>
            <person name="Rosenfelder H."/>
            <person name="Duda A."/>
            <person name="Schmidt C.P."/>
            <person name="Ernst U."/>
            <person name="Wellenreuther R."/>
            <person name="Mehrle A."/>
            <person name="Schuster C."/>
            <person name="Bahr A."/>
            <person name="Bloecker H."/>
            <person name="Heubner D."/>
            <person name="Hoerlein A."/>
            <person name="Michel G."/>
            <person name="Wedler H."/>
            <person name="Koehrer K."/>
            <person name="Ottenwaelder B."/>
            <person name="Poustka A."/>
            <person name="Wiemann S."/>
            <person name="Schupp I."/>
        </authorList>
    </citation>
    <scope>NUCLEOTIDE SEQUENCE [LARGE SCALE MRNA] OF 366-1651 (ISOFORM 2)</scope>
    <source>
        <tissue>Uterine endothelium</tissue>
    </source>
</reference>
<reference key="6">
    <citation type="journal article" date="1999" name="Cell">
        <title>Slit proteins bind Robo receptors and have an evolutionarily conserved role in repulsive axon guidance.</title>
        <authorList>
            <person name="Brose K."/>
            <person name="Bland K.S."/>
            <person name="Wang K.H."/>
            <person name="Arnott D."/>
            <person name="Henzel W."/>
            <person name="Goodman C.S."/>
            <person name="Tessier-Lavigne M."/>
            <person name="Kidd T."/>
        </authorList>
    </citation>
    <scope>FUNCTION</scope>
    <scope>INTERACTION WITH SLIT2</scope>
    <source>
        <tissue>Fetal brain</tissue>
    </source>
</reference>
<reference key="7">
    <citation type="journal article" date="1998" name="Mol. Cell. Neurosci.">
        <title>The DUTT1 gene, a novel NCAM family member is expressed in developing murine neural tissues and has an unusually broad pattern of expression.</title>
        <authorList>
            <person name="Sundaresan V."/>
            <person name="Roberts I."/>
            <person name="Bateman A."/>
            <person name="Bankier A."/>
            <person name="Sheppard M."/>
            <person name="Hobbs C."/>
            <person name="Xiong J."/>
            <person name="Minna J."/>
            <person name="Latif F."/>
            <person name="Lerman M."/>
            <person name="Rabbitts P."/>
        </authorList>
    </citation>
    <scope>TISSUE SPECIFICITY</scope>
</reference>
<reference key="8">
    <citation type="journal article" date="1998" name="Oncogene">
        <title>Homozygous deletions at 3p12 in breast and lung cancer.</title>
        <authorList>
            <person name="Sundaresan V."/>
            <person name="Chung G."/>
            <person name="Heppell-Parton A."/>
            <person name="Xiong J."/>
            <person name="Grundy C."/>
            <person name="Roberts I."/>
            <person name="James L."/>
            <person name="Cahn A."/>
            <person name="Bench A."/>
            <person name="Douglas J."/>
            <person name="Minna J."/>
            <person name="Sekido Y."/>
            <person name="Lerman M."/>
            <person name="Latif F."/>
            <person name="Bergh J."/>
            <person name="Li H."/>
            <person name="Lowe N."/>
            <person name="Ogilvie D."/>
            <person name="Rabbitts P."/>
        </authorList>
    </citation>
    <scope>MAPPING</scope>
    <scope>IDENTIFICATION (ISOFORM 3)</scope>
</reference>
<reference key="9">
    <citation type="journal article" date="2000" name="Cell">
        <title>Repulsive axon guidance: Abelson and Enabled play opposing roles downstream of the roundabout receptor.</title>
        <authorList>
            <person name="Bashaw G.J."/>
            <person name="Kidd T."/>
            <person name="Murray D."/>
            <person name="Pawson T."/>
            <person name="Goodman C.S."/>
        </authorList>
    </citation>
    <scope>PHOSPHORYLATION AT TYR-1038; TYR-1073 AND TYR-1114</scope>
</reference>
<reference key="10">
    <citation type="journal article" date="2001" name="J. Neurosci.">
        <title>Diversity and specificity of actions of Slit2 proteolytic fragments in axon guidance.</title>
        <authorList>
            <person name="Nguyen-Ba-Charvet K.T."/>
            <person name="Brose K."/>
            <person name="Ma L."/>
            <person name="Wang K.H."/>
            <person name="Marillat V."/>
            <person name="Sotelo C."/>
            <person name="Tessier-Lavigne M."/>
            <person name="Chedotal A."/>
        </authorList>
    </citation>
    <scope>INTERACTION WITH SLIT2</scope>
</reference>
<reference key="11">
    <citation type="journal article" date="2002" name="Oncogene">
        <title>Tumour specific promoter region methylation of the human homologue of the Drosophila Roundabout gene DUTT1 (ROBO1) in human cancers.</title>
        <authorList>
            <person name="Dallol A."/>
            <person name="Forgacs E."/>
            <person name="Martinez A."/>
            <person name="Sekido Y."/>
            <person name="Walker R."/>
            <person name="Kishida T."/>
            <person name="Rabbitts P."/>
            <person name="Maher E.R."/>
            <person name="Minna J.D."/>
            <person name="Latif F."/>
        </authorList>
    </citation>
    <scope>PROMOTER HYPERMETHYLATION</scope>
    <scope>VARIANTS ASN-1055 AND ASP-1533</scope>
</reference>
<reference key="12">
    <citation type="journal article" date="2006" name="Cell">
        <title>Global, in vivo, and site-specific phosphorylation dynamics in signaling networks.</title>
        <authorList>
            <person name="Olsen J.V."/>
            <person name="Blagoev B."/>
            <person name="Gnad F."/>
            <person name="Macek B."/>
            <person name="Kumar C."/>
            <person name="Mortensen P."/>
            <person name="Mann M."/>
        </authorList>
    </citation>
    <scope>IDENTIFICATION BY MASS SPECTROMETRY [LARGE SCALE ANALYSIS]</scope>
    <source>
        <tissue>Cervix carcinoma</tissue>
    </source>
</reference>
<reference key="13">
    <citation type="journal article" date="2008" name="Proc. Natl. Acad. Sci. U.S.A.">
        <title>A quantitative atlas of mitotic phosphorylation.</title>
        <authorList>
            <person name="Dephoure N."/>
            <person name="Zhou C."/>
            <person name="Villen J."/>
            <person name="Beausoleil S.A."/>
            <person name="Bakalarski C.E."/>
            <person name="Elledge S.J."/>
            <person name="Gygi S.P."/>
        </authorList>
    </citation>
    <scope>PHOSPHORYLATION [LARGE SCALE ANALYSIS] AT SER-940; SER-1055; THR-1240 AND SER-1297</scope>
    <scope>IDENTIFICATION BY MASS SPECTROMETRY [LARGE SCALE ANALYSIS]</scope>
    <source>
        <tissue>Cervix carcinoma</tissue>
    </source>
</reference>
<reference key="14">
    <citation type="journal article" date="2010" name="Sci. Signal.">
        <title>Quantitative phosphoproteomics reveals widespread full phosphorylation site occupancy during mitosis.</title>
        <authorList>
            <person name="Olsen J.V."/>
            <person name="Vermeulen M."/>
            <person name="Santamaria A."/>
            <person name="Kumar C."/>
            <person name="Miller M.L."/>
            <person name="Jensen L.J."/>
            <person name="Gnad F."/>
            <person name="Cox J."/>
            <person name="Jensen T.S."/>
            <person name="Nigg E.A."/>
            <person name="Brunak S."/>
            <person name="Mann M."/>
        </authorList>
    </citation>
    <scope>PHOSPHORYLATION [LARGE SCALE ANALYSIS] AT SER-940</scope>
    <scope>IDENTIFICATION BY MASS SPECTROMETRY [LARGE SCALE ANALYSIS]</scope>
    <source>
        <tissue>Cervix carcinoma</tissue>
    </source>
</reference>
<reference key="15">
    <citation type="journal article" date="2011" name="BMC Syst. Biol.">
        <title>Initial characterization of the human central proteome.</title>
        <authorList>
            <person name="Burkard T.R."/>
            <person name="Planyavsky M."/>
            <person name="Kaupe I."/>
            <person name="Breitwieser F.P."/>
            <person name="Buerckstuemmer T."/>
            <person name="Bennett K.L."/>
            <person name="Superti-Furga G."/>
            <person name="Colinge J."/>
        </authorList>
    </citation>
    <scope>IDENTIFICATION BY MASS SPECTROMETRY [LARGE SCALE ANALYSIS]</scope>
</reference>
<reference key="16">
    <citation type="journal article" date="2013" name="J. Proteome Res.">
        <title>Toward a comprehensive characterization of a human cancer cell phosphoproteome.</title>
        <authorList>
            <person name="Zhou H."/>
            <person name="Di Palma S."/>
            <person name="Preisinger C."/>
            <person name="Peng M."/>
            <person name="Polat A.N."/>
            <person name="Heck A.J."/>
            <person name="Mohammed S."/>
        </authorList>
    </citation>
    <scope>PHOSPHORYLATION [LARGE SCALE ANALYSIS] AT SER-940; THR-948 AND SER-1055</scope>
    <scope>IDENTIFICATION BY MASS SPECTROMETRY [LARGE SCALE ANALYSIS]</scope>
    <source>
        <tissue>Cervix carcinoma</tissue>
    </source>
</reference>
<reference key="17">
    <citation type="journal article" date="2014" name="Biochem. J.">
        <title>Roundabout 1 exists predominantly as a basal dimeric complex and this is unaffected by binding of the ligand Slit2.</title>
        <authorList>
            <person name="Zakrys L."/>
            <person name="Ward R.J."/>
            <person name="Pediani J.D."/>
            <person name="Godin A.G."/>
            <person name="Graham G.J."/>
            <person name="Milligan G."/>
        </authorList>
    </citation>
    <scope>SUBUNIT</scope>
</reference>
<reference key="18">
    <citation type="journal article" date="2014" name="Curr. Biol.">
        <title>FLRT3 is a Robo1-interacting protein that determines Netrin-1 attraction in developing axons.</title>
        <authorList>
            <person name="Leyva-Diaz E."/>
            <person name="del Toro D."/>
            <person name="Menal M.J."/>
            <person name="Cambray S."/>
            <person name="Susin R."/>
            <person name="Tessier-Lavigne M."/>
            <person name="Klein R."/>
            <person name="Egea J."/>
            <person name="Lopez-Bendito G."/>
        </authorList>
    </citation>
    <scope>INTERACTION WITH FLRT3</scope>
    <scope>FUNCTION</scope>
    <scope>SUBCELLULAR LOCATION</scope>
</reference>
<reference key="19">
    <citation type="journal article" date="2015" name="J. Clin. Invest.">
        <title>Myo9b is a key player in SLIT/ROBO-mediated lung tumor suppression.</title>
        <authorList>
            <person name="Kong R."/>
            <person name="Yi F."/>
            <person name="Wen P."/>
            <person name="Liu J."/>
            <person name="Chen X."/>
            <person name="Ren J."/>
            <person name="Li X."/>
            <person name="Shang Y."/>
            <person name="Nie Y."/>
            <person name="Wu K."/>
            <person name="Fan D."/>
            <person name="Zhu L."/>
            <person name="Feng W."/>
            <person name="Wu J.Y."/>
        </authorList>
    </citation>
    <scope>FUNCTION</scope>
    <scope>INTERACTION WITH MYO9B</scope>
</reference>
<reference key="20">
    <citation type="journal article" date="2007" name="Proc. Natl. Acad. Sci. U.S.A.">
        <title>Structural insights into the Slit-Robo complex.</title>
        <authorList>
            <person name="Morlot C."/>
            <person name="Thielens N.M."/>
            <person name="Ravelli R.B."/>
            <person name="Hemrika W."/>
            <person name="Romijn R.A."/>
            <person name="Gros P."/>
            <person name="Cusack S."/>
            <person name="McCarthy A.A."/>
        </authorList>
    </citation>
    <scope>X-RAY CRYSTALLOGRAPHY (1.70 ANGSTROMS) OF 61-166 IN COMPLEX WITH SLIT2</scope>
    <scope>INTERACTION WITH SLIT2</scope>
    <scope>DISULFIDE BONDS</scope>
</reference>
<reference key="21">
    <citation type="submission" date="2007-10" db="PDB data bank">
        <title>Solution structure of the fifth Ig-like domain from human roundabout homolog 1.</title>
        <authorList>
            <consortium name="RIKEN structural genomics initiative (RSGI)"/>
        </authorList>
    </citation>
    <scope>STRUCTURE BY NMR OF 454-564</scope>
    <scope>DISULFIDE BOND</scope>
</reference>
<reference key="22">
    <citation type="journal article" date="2017" name="J. Clin. Endocrinol. Metab.">
        <title>Mutations in the human ROBO1 Gene in pituitary stalk interruption syndrome.</title>
        <authorList>
            <person name="Bashamboo A."/>
            <person name="Bignon-Topalovic J."/>
            <person name="Moussi N."/>
            <person name="McElreavey K."/>
            <person name="Brauner R."/>
        </authorList>
    </citation>
    <scope>VARIANTS CPHD8 SER-240 AND 1150-TYR--SER-1651 DEL</scope>
    <scope>INVOLVEMENT IN CPHD8</scope>
</reference>
<reference key="23">
    <citation type="journal article" date="2018" name="Clin. Genet.">
        <title>Targeted gene sequencing and whole-exome sequencing in autopsied fetuses with prenatally diagnosed kidney anomalies.</title>
        <authorList>
            <person name="Rasmussen M."/>
            <person name="Sunde L."/>
            <person name="Nielsen M.L."/>
            <person name="Ramsing M."/>
            <person name="Petersen A."/>
            <person name="Hjortshoej T.D."/>
            <person name="Olsen T.E."/>
            <person name="Tabor A."/>
            <person name="Hertz J.M."/>
            <person name="Johnsen I."/>
            <person name="Sperling L."/>
            <person name="Petersen O.B."/>
            <person name="Jensen U.B."/>
            <person name="Moeller F.G."/>
            <person name="Petersen M.B."/>
            <person name="Lildballe D.L."/>
        </authorList>
    </citation>
    <scope>VARIANTS NORS SER-176; 1229-GLU--SER-1651 DEL AND 1608-SER--SER-1651 DEL</scope>
    <scope>INVOLVEMENT IN NORS</scope>
</reference>
<reference key="24">
    <citation type="journal article" date="2020" name="J. Clin. Res. Pediatr. Endocrinol.">
        <title>A novel missense mutation in human receptor roundabout-1 (ROBO1) gene associated with pituitary stalk interruption syndrome.</title>
        <authorList>
            <person name="Liu Z."/>
            <person name="Chen X."/>
        </authorList>
    </citation>
    <scope>VARIANT CPHD8 SER-564</scope>
    <scope>INVOLVEMENT IN CPHD8</scope>
</reference>
<reference key="25">
    <citation type="journal article" date="2022" name="Hum. Mol. Genet.">
        <title>Novel dominant and recessive variants in human ROBO1 cause distinct neurodevelopmental defects through different mechanisms.</title>
        <authorList>
            <person name="Huang Y."/>
            <person name="Ma M."/>
            <person name="Mao X."/>
            <person name="Pehlivan D."/>
            <person name="Kanca O."/>
            <person name="Un-Candan F."/>
            <person name="Shu L."/>
            <person name="Akay G."/>
            <person name="Mitani T."/>
            <person name="Lu S."/>
            <person name="Candan S."/>
            <person name="Wang H."/>
            <person name="Xiao B."/>
            <person name="Lupski J.R."/>
            <person name="Bellen H.J."/>
        </authorList>
    </citation>
    <scope>VARIANT GLY-422</scope>
    <scope>VARIANT NYS8 LEU-1522</scope>
    <scope>INVOLVEMENT IN NYS8</scope>
</reference>
<reference key="26">
    <citation type="journal article" date="2022" name="Kidney Int.">
        <title>Biallelic pathogenic variants in roundabout guidance receptor 1 associate with syndromic congenital anomalies of the kidney and urinary tract.</title>
        <authorList>
            <consortium name="Genomics England Research Consortium"/>
            <person name="Muench J."/>
            <person name="Engesser M."/>
            <person name="Schoenauer R."/>
            <person name="Hamm J.A."/>
            <person name="Hartig C."/>
            <person name="Hantmann E."/>
            <person name="Akay G."/>
            <person name="Pehlivan D."/>
            <person name="Mitani T."/>
            <person name="Coban Akdemir Z."/>
            <person name="Tueysuez B."/>
            <person name="Shirakawa T."/>
            <person name="Dateki S."/>
            <person name="Claus L.R."/>
            <person name="van Eerde A.M."/>
            <person name="Smol T."/>
            <person name="Devisme L."/>
            <person name="Franquet H."/>
            <person name="Attie-Bitach T."/>
            <person name="Wagner T."/>
            <person name="Bergmann C."/>
            <person name="Hoehn A.K."/>
            <person name="Shril S."/>
            <person name="Pollack A."/>
            <person name="Wenger T."/>
            <person name="Scott A.A."/>
            <person name="Paolucci S."/>
            <person name="Buchan J."/>
            <person name="Gabriel G.C."/>
            <person name="Posey J.E."/>
            <person name="Lupski J.R."/>
            <person name="Petit F."/>
            <person name="McCarthy A.A."/>
            <person name="Pazour G.J."/>
            <person name="Lo C.W."/>
            <person name="Popp B."/>
            <person name="Halbritter J."/>
        </authorList>
    </citation>
    <scope>VARIANTS NORS 229-TYR--SER-1651 DEL; ALA-273; 284-GLU--SER-1651 DEL; 400-GLN--SER-1651 DEL; PRO-689; 920-ARG--SER-1651 DEL; 975-TRP--SER-1651 DEL AND 1386-GLY--SER-1651 DEL</scope>
    <scope>INVOLVEMENT IN NORS</scope>
</reference>
<gene>
    <name type="primary">ROBO1</name>
    <name type="synonym">DUTT1</name>
</gene>
<proteinExistence type="evidence at protein level"/>
<sequence>MKWKHVPFLVMISLLSLSPNHLFLAQLIPDPEDVERGNDHGTPIPTSDNDDNSLGYTGSRLRQEDFPPRIVEHPSDLIVSKGEPATLNCKAEGRPTPTIEWYKGGERVETDKDDPRSHRMLLPSGSLFFLRIVHGRKSRPDEGVYVCVARNYLGEAVSHNASLEVAILRDDFRQNPSDVMVAVGEPAVMECQPPRGHPEPTISWKKDGSPLDDKDERITIRGGKLMITYTRKSDAGKYVCVGTNMVGERESEVAELTVLERPSFVKRPSNLAVTVDDSAEFKCEARGDPVPTVRWRKDDGELPKSRYEIRDDHTLKIRKVTAGDMGSYTCVAENMVGKAEASATLTVQEPPHFVVKPRDQVVALGRTVTFQCEATGNPQPAIFWRREGSQNLLFSYQPPQSSSRFSVSQTGDLTITNVQRSDVGYYICQTLNVAGSIITKAYLEVTDVIADRPPPVIRQGPVNQTVAVDGTFVLSCVATGSPVPTILWRKDGVLVSTQDSRIKQLENGVLQIRYAKLGDTGRYTCIASTPSGEATWSAYIEVQEFGVPVQPPRPTDPNLIPSAPSKPEVTDVSRNTVTLSWQPNLNSGATPTSYIIEAFSHASGSSWQTVAENVKTETSAIKGLKPNAIYLFLVRAANAYGISDPSQISDPVKTQDVLPTSQGVDHKQVQRELGNAVLHLHNPTVLSSSSIEVHWTVDQQSQYIQGYKILYRPSGANHGESDWLVFEVRTPAKNSVVIPDLRKGVNYEIKARPFFNEFQGADSEIKFAKTLEEAPSAPPQGVTVSKNDGNGTAILVSWQPPPEDTQNGMVQEYKVWCLGNETRYHINKTVDGSTFSVVIPFLVPGIRYSVEVAASTGAGSGVKSEPQFIQLDAHGNPVSPEDQVSLAQQISDVVKQPAFIAGIGAACWIILMVFSIWLYRHRKKRNGLTSTYAGIRKVPSFTFTPTVTYQRGGEAVSSGGRPGLLNISEPAAQPWLADTWPNTGNNHNDCSISCCTAGNGNSDSNLTTYSRPADCIANYNNQLDNKQTNLMLPESTVYGDVDLSNKINEMKTFNSPNLKDGRFVNPSGQPTPYATTQLIQSNLSNNMNNGSGDSGEKHWKPLGQQKQEVAPVQYNIVEQNKLNKDYRANDTVPPTIPYNQSYDQNTGGSYNSSDRGSSTSGSQGHKKGARTPKVPKQGGMNWADLLPPPPAHPPPHSNSEEYNISVDESYDQEMPCPVPPARMYLQQDELEEEEDERGPTPPVRGAASSPAAVSYSHQSTATLTPSPQEELQPMLQDCPEETGHMQHQPDRRRQPVSPPPPPRPISPPHTYGYISGPLVSDMDTDAPEEEEDEADMEVAKMQTRRLLLRGLEQTPASSVGDLESSVTGSMINGWGSASEEDNISSGRSSVSSSDGSFFTDADFAQAVAAAAEYAGLKVARRQMQDAAGRRHFHASQCPRPTSPVSTDSNMSAAVMQKTRPAKKLKHQPGHLRRETYTDDLPPPPVPPPAIKSPTAQSKTQLEVRPVVVPKLPSMDARTDRSSDRKGSSYKGREVLDGRQVVDMRTNPGDPREAQEQQNDGKGRGNKAAKRDLPPAKTHLIQEDILPYCRPTFPTSNNPRDPSSSSSMSSRGSGSRQREQANVGRRNIAEMQVLGGYERGEDNNEELEETES</sequence>
<organism>
    <name type="scientific">Homo sapiens</name>
    <name type="common">Human</name>
    <dbReference type="NCBI Taxonomy" id="9606"/>
    <lineage>
        <taxon>Eukaryota</taxon>
        <taxon>Metazoa</taxon>
        <taxon>Chordata</taxon>
        <taxon>Craniata</taxon>
        <taxon>Vertebrata</taxon>
        <taxon>Euteleostomi</taxon>
        <taxon>Mammalia</taxon>
        <taxon>Eutheria</taxon>
        <taxon>Euarchontoglires</taxon>
        <taxon>Primates</taxon>
        <taxon>Haplorrhini</taxon>
        <taxon>Catarrhini</taxon>
        <taxon>Hominidae</taxon>
        <taxon>Homo</taxon>
    </lineage>
</organism>
<evidence type="ECO:0000250" key="1">
    <source>
        <dbReference type="UniProtKB" id="O55005"/>
    </source>
</evidence>
<evidence type="ECO:0000250" key="2">
    <source>
        <dbReference type="UniProtKB" id="O89026"/>
    </source>
</evidence>
<evidence type="ECO:0000255" key="3"/>
<evidence type="ECO:0000255" key="4">
    <source>
        <dbReference type="PROSITE-ProRule" id="PRU00114"/>
    </source>
</evidence>
<evidence type="ECO:0000255" key="5">
    <source>
        <dbReference type="PROSITE-ProRule" id="PRU00316"/>
    </source>
</evidence>
<evidence type="ECO:0000256" key="6">
    <source>
        <dbReference type="SAM" id="MobiDB-lite"/>
    </source>
</evidence>
<evidence type="ECO:0000269" key="7">
    <source>
    </source>
</evidence>
<evidence type="ECO:0000269" key="8">
    <source>
    </source>
</evidence>
<evidence type="ECO:0000269" key="9">
    <source>
    </source>
</evidence>
<evidence type="ECO:0000269" key="10">
    <source>
    </source>
</evidence>
<evidence type="ECO:0000269" key="11">
    <source>
    </source>
</evidence>
<evidence type="ECO:0000269" key="12">
    <source>
    </source>
</evidence>
<evidence type="ECO:0000269" key="13">
    <source>
    </source>
</evidence>
<evidence type="ECO:0000269" key="14">
    <source>
    </source>
</evidence>
<evidence type="ECO:0000269" key="15">
    <source>
    </source>
</evidence>
<evidence type="ECO:0000269" key="16">
    <source>
    </source>
</evidence>
<evidence type="ECO:0000269" key="17">
    <source>
    </source>
</evidence>
<evidence type="ECO:0000269" key="18">
    <source>
    </source>
</evidence>
<evidence type="ECO:0000269" key="19">
    <source>
    </source>
</evidence>
<evidence type="ECO:0000269" key="20">
    <source>
    </source>
</evidence>
<evidence type="ECO:0000269" key="21">
    <source ref="21"/>
</evidence>
<evidence type="ECO:0000303" key="22">
    <source>
    </source>
</evidence>
<evidence type="ECO:0000303" key="23">
    <source>
    </source>
</evidence>
<evidence type="ECO:0000305" key="24"/>
<evidence type="ECO:0007744" key="25">
    <source>
        <dbReference type="PDB" id="2EO9"/>
    </source>
</evidence>
<evidence type="ECO:0007744" key="26">
    <source>
        <dbReference type="PDB" id="2V9Q"/>
    </source>
</evidence>
<evidence type="ECO:0007744" key="27">
    <source>
        <dbReference type="PDB" id="2V9R"/>
    </source>
</evidence>
<evidence type="ECO:0007744" key="28">
    <source>
        <dbReference type="PDB" id="2V9T"/>
    </source>
</evidence>
<evidence type="ECO:0007744" key="29">
    <source>
    </source>
</evidence>
<evidence type="ECO:0007744" key="30">
    <source>
    </source>
</evidence>
<evidence type="ECO:0007744" key="31">
    <source>
    </source>
</evidence>
<evidence type="ECO:0007829" key="32">
    <source>
        <dbReference type="PDB" id="2V9Q"/>
    </source>
</evidence>
<evidence type="ECO:0007829" key="33">
    <source>
        <dbReference type="PDB" id="2V9R"/>
    </source>
</evidence>
<evidence type="ECO:0007829" key="34">
    <source>
        <dbReference type="PDB" id="2V9T"/>
    </source>
</evidence>
<evidence type="ECO:0007829" key="35">
    <source>
        <dbReference type="PDB" id="3WIH"/>
    </source>
</evidence>
<evidence type="ECO:0007829" key="36">
    <source>
        <dbReference type="PDB" id="4HLJ"/>
    </source>
</evidence>
<evidence type="ECO:0007829" key="37">
    <source>
        <dbReference type="PDB" id="5O5G"/>
    </source>
</evidence>
<evidence type="ECO:0007829" key="38">
    <source>
        <dbReference type="PDB" id="5OPE"/>
    </source>
</evidence>
<evidence type="ECO:0007829" key="39">
    <source>
        <dbReference type="PDB" id="6A77"/>
    </source>
</evidence>
<evidence type="ECO:0007829" key="40">
    <source>
        <dbReference type="PDB" id="6A78"/>
    </source>
</evidence>
<keyword id="KW-0002">3D-structure</keyword>
<keyword id="KW-0025">Alternative splicing</keyword>
<keyword id="KW-1003">Cell membrane</keyword>
<keyword id="KW-0966">Cell projection</keyword>
<keyword id="KW-0145">Chemotaxis</keyword>
<keyword id="KW-0217">Developmental protein</keyword>
<keyword id="KW-0221">Differentiation</keyword>
<keyword id="KW-0225">Disease variant</keyword>
<keyword id="KW-1015">Disulfide bond</keyword>
<keyword id="KW-0242">Dwarfism</keyword>
<keyword id="KW-0325">Glycoprotein</keyword>
<keyword id="KW-0393">Immunoglobulin domain</keyword>
<keyword id="KW-0991">Intellectual disability</keyword>
<keyword id="KW-0472">Membrane</keyword>
<keyword id="KW-0524">Neurogenesis</keyword>
<keyword id="KW-0597">Phosphoprotein</keyword>
<keyword id="KW-1267">Proteomics identification</keyword>
<keyword id="KW-0675">Receptor</keyword>
<keyword id="KW-1185">Reference proteome</keyword>
<keyword id="KW-0677">Repeat</keyword>
<keyword id="KW-0732">Signal</keyword>
<keyword id="KW-0812">Transmembrane</keyword>
<keyword id="KW-1133">Transmembrane helix</keyword>
<keyword id="KW-0832">Ubl conjugation</keyword>